<sequence>MTIVHRRLALAIGDPHGIGPEIALKALRQLSANERSLIKVYGPWSALEQAAQICQMESLLQDLIHEEAGSLAQPAQWGEITPQAGLSTVQSATAAIRACENGEVDAVIACPHHETAIHRAGIAFSGYPSLLANVLGMNEDQVFLMLVGAGLRIVHVTLHESVRSALERLSPQLVVNAVQAAVQTCTLLGVPKPQVAVFGINPHASEGQLFGLEDSQITAPAVETLRKCGLAVDGPMGADMVLAQRKHDLYVAMLHDQGHIPIKLLAPNGASALSIGGRVVLSSVGHGSAMDIAGRGVADSTALLRTIALLGAQPG</sequence>
<reference key="1">
    <citation type="journal article" date="2006" name="Appl. Environ. Microbiol.">
        <title>Characterization of the terephthalate degradation genes of Comamonas sp. strain E6.</title>
        <authorList>
            <person name="Sasoh M."/>
            <person name="Masai E."/>
            <person name="Ishibashi S."/>
            <person name="Hara H."/>
            <person name="Kamimura N."/>
            <person name="Miyauchi K."/>
            <person name="Fukuda M."/>
        </authorList>
    </citation>
    <scope>NUCLEOTIDE SEQUENCE [GENOMIC DNA]</scope>
    <scope>FUNCTION AS A DCD DEHYDROGENASE AND IN THE TEREPHTHALATE DEGRADATION</scope>
    <scope>CATALYTIC ACTIVITY</scope>
    <source>
        <strain>E6</strain>
    </source>
</reference>
<gene>
    <name type="primary">tphBI</name>
</gene>
<comment type="function">
    <text evidence="2">Involved in the degradation of terephthalate (TPA) via the protocatechuate (PCA) 4,5-cleavage pathway. Catalyzes the dehydrogenation of 1,2-dihydroxy-3,5-cyclohexadiene-1,4-dicarboxylate (DCD) to yield protocatechuate (PCA).</text>
</comment>
<comment type="catalytic activity">
    <reaction evidence="2">
        <text>(3S,4R)-3,4-dihydroxycyclohexa-1,5-diene-1,4-dicarboxylate + NAD(+) = 3,4-dihydroxybenzoate + CO2 + NADH</text>
        <dbReference type="Rhea" id="RHEA:10744"/>
        <dbReference type="ChEBI" id="CHEBI:16526"/>
        <dbReference type="ChEBI" id="CHEBI:36241"/>
        <dbReference type="ChEBI" id="CHEBI:57412"/>
        <dbReference type="ChEBI" id="CHEBI:57540"/>
        <dbReference type="ChEBI" id="CHEBI:57945"/>
        <dbReference type="EC" id="1.3.1.53"/>
    </reaction>
</comment>
<comment type="similarity">
    <text evidence="3">Belongs to the PdxA family.</text>
</comment>
<protein>
    <recommendedName>
        <fullName>1,2-dihydroxy-3,5-cyclohexadiene-1,4-dicarboxylate dehydrogenase</fullName>
        <shortName>DCD dehydrogenase</shortName>
        <ecNumber>1.3.1.53</ecNumber>
    </recommendedName>
    <alternativeName>
        <fullName>Terephthalate dihydrodiol dehydrogenase</fullName>
    </alternativeName>
</protein>
<dbReference type="EC" id="1.3.1.53"/>
<dbReference type="EMBL" id="AB238678">
    <property type="protein sequence ID" value="BAE47079.1"/>
    <property type="molecule type" value="Genomic_DNA"/>
</dbReference>
<dbReference type="SMR" id="Q3C1E1"/>
<dbReference type="GO" id="GO:0047120">
    <property type="term" value="F:(3S,4R)-3,4-dihydroxycyclohexa-1,5-diene-1,4-dicarboxylate dehydrogenase activity"/>
    <property type="evidence" value="ECO:0000314"/>
    <property type="project" value="UniProtKB"/>
</dbReference>
<dbReference type="GO" id="GO:0046872">
    <property type="term" value="F:metal ion binding"/>
    <property type="evidence" value="ECO:0007669"/>
    <property type="project" value="UniProtKB-KW"/>
</dbReference>
<dbReference type="GO" id="GO:0051287">
    <property type="term" value="F:NAD binding"/>
    <property type="evidence" value="ECO:0007669"/>
    <property type="project" value="InterPro"/>
</dbReference>
<dbReference type="GO" id="GO:0018963">
    <property type="term" value="P:phthalate metabolic process"/>
    <property type="evidence" value="ECO:0000314"/>
    <property type="project" value="UniProtKB"/>
</dbReference>
<dbReference type="FunFam" id="3.40.718.10:FF:000038">
    <property type="entry name" value="1,2-dihydroxy-3,5-cyclohexadiene-1,4-dicarboxylate dehydrogenase"/>
    <property type="match status" value="1"/>
</dbReference>
<dbReference type="Gene3D" id="3.40.718.10">
    <property type="entry name" value="Isopropylmalate Dehydrogenase"/>
    <property type="match status" value="1"/>
</dbReference>
<dbReference type="InterPro" id="IPR005255">
    <property type="entry name" value="PdxA_fam"/>
</dbReference>
<dbReference type="PANTHER" id="PTHR30004">
    <property type="entry name" value="4-HYDROXYTHREONINE-4-PHOSPHATE DEHYDROGENASE"/>
    <property type="match status" value="1"/>
</dbReference>
<dbReference type="PANTHER" id="PTHR30004:SF6">
    <property type="entry name" value="D-THREONATE 4-PHOSPHATE DEHYDROGENASE"/>
    <property type="match status" value="1"/>
</dbReference>
<dbReference type="Pfam" id="PF04166">
    <property type="entry name" value="PdxA"/>
    <property type="match status" value="1"/>
</dbReference>
<dbReference type="SUPFAM" id="SSF53659">
    <property type="entry name" value="Isocitrate/Isopropylmalate dehydrogenase-like"/>
    <property type="match status" value="1"/>
</dbReference>
<proteinExistence type="evidence at protein level"/>
<organism>
    <name type="scientific">Comamonas sp</name>
    <dbReference type="NCBI Taxonomy" id="34028"/>
    <lineage>
        <taxon>Bacteria</taxon>
        <taxon>Pseudomonadati</taxon>
        <taxon>Pseudomonadota</taxon>
        <taxon>Betaproteobacteria</taxon>
        <taxon>Burkholderiales</taxon>
        <taxon>Comamonadaceae</taxon>
        <taxon>Comamonas</taxon>
    </lineage>
</organism>
<feature type="chain" id="PRO_0000418983" description="1,2-dihydroxy-3,5-cyclohexadiene-1,4-dicarboxylate dehydrogenase">
    <location>
        <begin position="1"/>
        <end position="315"/>
    </location>
</feature>
<feature type="binding site" evidence="1">
    <location>
        <position position="159"/>
    </location>
    <ligand>
        <name>a divalent metal cation</name>
        <dbReference type="ChEBI" id="CHEBI:60240"/>
        <note>ligand shared between dimeric partners</note>
    </ligand>
</feature>
<feature type="binding site" evidence="1">
    <location>
        <position position="203"/>
    </location>
    <ligand>
        <name>a divalent metal cation</name>
        <dbReference type="ChEBI" id="CHEBI:60240"/>
        <note>ligand shared between dimeric partners</note>
    </ligand>
</feature>
<feature type="binding site" evidence="1">
    <location>
        <position position="255"/>
    </location>
    <ligand>
        <name>a divalent metal cation</name>
        <dbReference type="ChEBI" id="CHEBI:60240"/>
        <note>ligand shared between dimeric partners</note>
    </ligand>
</feature>
<evidence type="ECO:0000250" key="1"/>
<evidence type="ECO:0000269" key="2">
    <source>
    </source>
</evidence>
<evidence type="ECO:0000305" key="3"/>
<accession>Q3C1E1</accession>
<name>TPHB_COMSP</name>
<keyword id="KW-0479">Metal-binding</keyword>
<keyword id="KW-0520">NAD</keyword>
<keyword id="KW-0560">Oxidoreductase</keyword>